<feature type="chain" id="PRO_0000122523" description="Sucrose transport protein SUC2">
    <location>
        <begin position="1"/>
        <end position="512"/>
    </location>
</feature>
<feature type="topological domain" description="Cytoplasmic" evidence="1">
    <location>
        <begin position="1"/>
        <end position="31"/>
    </location>
</feature>
<feature type="transmembrane region" description="Helical" evidence="1">
    <location>
        <begin position="32"/>
        <end position="52"/>
    </location>
</feature>
<feature type="topological domain" description="Extracellular" evidence="1">
    <location>
        <begin position="53"/>
        <end position="65"/>
    </location>
</feature>
<feature type="transmembrane region" description="Helical" evidence="1">
    <location>
        <begin position="66"/>
        <end position="86"/>
    </location>
</feature>
<feature type="topological domain" description="Cytoplasmic" evidence="1">
    <location>
        <begin position="87"/>
        <end position="100"/>
    </location>
</feature>
<feature type="transmembrane region" description="Helical" evidence="1">
    <location>
        <begin position="101"/>
        <end position="121"/>
    </location>
</feature>
<feature type="topological domain" description="Extracellular" evidence="1">
    <location>
        <begin position="122"/>
        <end position="138"/>
    </location>
</feature>
<feature type="transmembrane region" description="Helical" evidence="1">
    <location>
        <begin position="139"/>
        <end position="159"/>
    </location>
</feature>
<feature type="topological domain" description="Cytoplasmic" evidence="1">
    <location>
        <begin position="160"/>
        <end position="177"/>
    </location>
</feature>
<feature type="transmembrane region" description="Helical" evidence="1">
    <location>
        <begin position="178"/>
        <end position="198"/>
    </location>
</feature>
<feature type="topological domain" description="Extracellular" evidence="1">
    <location>
        <begin position="199"/>
        <end position="223"/>
    </location>
</feature>
<feature type="transmembrane region" description="Helical" evidence="1">
    <location>
        <begin position="224"/>
        <end position="244"/>
    </location>
</feature>
<feature type="topological domain" description="Cytoplasmic" evidence="1">
    <location>
        <begin position="245"/>
        <end position="278"/>
    </location>
</feature>
<feature type="transmembrane region" description="Helical" evidence="1">
    <location>
        <begin position="279"/>
        <end position="299"/>
    </location>
</feature>
<feature type="topological domain" description="Extracellular" evidence="1">
    <location>
        <begin position="300"/>
        <end position="332"/>
    </location>
</feature>
<feature type="transmembrane region" description="Helical" evidence="1">
    <location>
        <begin position="333"/>
        <end position="353"/>
    </location>
</feature>
<feature type="topological domain" description="Cytoplasmic" evidence="1">
    <location>
        <begin position="354"/>
        <end position="362"/>
    </location>
</feature>
<feature type="transmembrane region" description="Helical" evidence="1">
    <location>
        <begin position="363"/>
        <end position="383"/>
    </location>
</feature>
<feature type="topological domain" description="Extracellular" evidence="1">
    <location>
        <begin position="384"/>
        <end position="407"/>
    </location>
</feature>
<feature type="transmembrane region" description="Helical" evidence="1">
    <location>
        <begin position="408"/>
        <end position="428"/>
    </location>
</feature>
<feature type="topological domain" description="Cytoplasmic" evidence="1">
    <location>
        <begin position="429"/>
        <end position="440"/>
    </location>
</feature>
<feature type="transmembrane region" description="Helical" evidence="1">
    <location>
        <begin position="441"/>
        <end position="461"/>
    </location>
</feature>
<feature type="topological domain" description="Extracellular" evidence="1">
    <location>
        <begin position="462"/>
        <end position="473"/>
    </location>
</feature>
<feature type="transmembrane region" description="Helical" evidence="1">
    <location>
        <begin position="474"/>
        <end position="494"/>
    </location>
</feature>
<feature type="topological domain" description="Cytoplasmic" evidence="1">
    <location>
        <begin position="495"/>
        <end position="512"/>
    </location>
</feature>
<feature type="glycosylation site" description="N-linked (GlcNAc...) asparagine" evidence="1">
    <location>
        <position position="402"/>
    </location>
</feature>
<feature type="sequence conflict" description="In Ref. 4; AAM10322." evidence="13" ref="4">
    <original>N</original>
    <variation>S</variation>
    <location>
        <position position="221"/>
    </location>
</feature>
<feature type="sequence conflict" description="In Ref. 1; CAA53150." evidence="13" ref="1">
    <original>A</original>
    <variation>G</variation>
    <location>
        <position position="491"/>
    </location>
</feature>
<sequence>MVSHPMEKAANGASALETQTGELDQPERLRKIISVSSIAAGVQFGWALQLSLLTPYVQLLGIPHKWASLIWLCGPISGMLVQPIVGYHSDRCTSRFGRRRPFIVAGAGLVTVAVFLIGYAADIGHSMGDQLDKPPKTRAIAIFALGFWILDVANNTLQGPCRAFLADLSAGNAKKTRTANAFFSFFMAVGNVLGYAAGSYRNLYKVVPFTMTESCDLYCANLKTCFFLSITLLLIVTFVSLCYVKEKPWTPEPTADGKASNVPFFGEIFGAFKELKRPMWMLLIVTALNWIAWFPFLLFDTDWMGREVYGGNSDATATAASKKLYNDGVRAGALGLMLNAIVLGFMSLGVEWIGRKLGGAKRLWGIVNFILAICLAMTVVVTKQAENHRRDHGGAKTGPPGNVTAGALTLFAILGIPQAITFSIPFALASIFSTNSGAGQGLSLGVLNLAIVVPQMVISVGGGPFDELFGGGNIPAFVLGAIAAAVSGVLALTVLPSPPPDAPAFKATMGFH</sequence>
<keyword id="KW-1003">Cell membrane</keyword>
<keyword id="KW-0325">Glycoprotein</keyword>
<keyword id="KW-0472">Membrane</keyword>
<keyword id="KW-1185">Reference proteome</keyword>
<keyword id="KW-0762">Sugar transport</keyword>
<keyword id="KW-0769">Symport</keyword>
<keyword id="KW-0812">Transmembrane</keyword>
<keyword id="KW-1133">Transmembrane helix</keyword>
<keyword id="KW-0813">Transport</keyword>
<gene>
    <name evidence="12" type="primary">SUC2</name>
    <name evidence="11" type="synonym">SUT1</name>
    <name evidence="14" type="ordered locus">At1g22710</name>
    <name evidence="15" type="ORF">T22J18.12</name>
</gene>
<evidence type="ECO:0000255" key="1"/>
<evidence type="ECO:0000269" key="2">
    <source>
    </source>
</evidence>
<evidence type="ECO:0000269" key="3">
    <source>
    </source>
</evidence>
<evidence type="ECO:0000269" key="4">
    <source>
    </source>
</evidence>
<evidence type="ECO:0000269" key="5">
    <source>
    </source>
</evidence>
<evidence type="ECO:0000269" key="6">
    <source>
    </source>
</evidence>
<evidence type="ECO:0000269" key="7">
    <source>
    </source>
</evidence>
<evidence type="ECO:0000269" key="8">
    <source>
    </source>
</evidence>
<evidence type="ECO:0000269" key="9">
    <source ref="7"/>
</evidence>
<evidence type="ECO:0000303" key="10">
    <source>
    </source>
</evidence>
<evidence type="ECO:0000303" key="11">
    <source>
    </source>
</evidence>
<evidence type="ECO:0000303" key="12">
    <source>
    </source>
</evidence>
<evidence type="ECO:0000305" key="13"/>
<evidence type="ECO:0000312" key="14">
    <source>
        <dbReference type="Araport" id="AT1G22710"/>
    </source>
</evidence>
<evidence type="ECO:0000312" key="15">
    <source>
        <dbReference type="EMBL" id="AAC25515.1"/>
    </source>
</evidence>
<organism>
    <name type="scientific">Arabidopsis thaliana</name>
    <name type="common">Mouse-ear cress</name>
    <dbReference type="NCBI Taxonomy" id="3702"/>
    <lineage>
        <taxon>Eukaryota</taxon>
        <taxon>Viridiplantae</taxon>
        <taxon>Streptophyta</taxon>
        <taxon>Embryophyta</taxon>
        <taxon>Tracheophyta</taxon>
        <taxon>Spermatophyta</taxon>
        <taxon>Magnoliopsida</taxon>
        <taxon>eudicotyledons</taxon>
        <taxon>Gunneridae</taxon>
        <taxon>Pentapetalae</taxon>
        <taxon>rosids</taxon>
        <taxon>malvids</taxon>
        <taxon>Brassicales</taxon>
        <taxon>Brassicaceae</taxon>
        <taxon>Camelineae</taxon>
        <taxon>Arabidopsis</taxon>
    </lineage>
</organism>
<proteinExistence type="evidence at protein level"/>
<name>SUC2_ARATH</name>
<accession>Q39231</accession>
<accession>O80550</accession>
<accession>Q8RWQ6</accession>
<dbReference type="EMBL" id="X75382">
    <property type="protein sequence ID" value="CAA53150.1"/>
    <property type="molecule type" value="mRNA"/>
</dbReference>
<dbReference type="EMBL" id="AC003979">
    <property type="protein sequence ID" value="AAC25515.1"/>
    <property type="molecule type" value="Genomic_DNA"/>
</dbReference>
<dbReference type="EMBL" id="CP002684">
    <property type="protein sequence ID" value="AEE30276.1"/>
    <property type="molecule type" value="Genomic_DNA"/>
</dbReference>
<dbReference type="EMBL" id="AY091774">
    <property type="protein sequence ID" value="AAM10322.1"/>
    <property type="molecule type" value="mRNA"/>
</dbReference>
<dbReference type="EMBL" id="AY048256">
    <property type="protein sequence ID" value="AAK82518.1"/>
    <property type="molecule type" value="mRNA"/>
</dbReference>
<dbReference type="EMBL" id="AY050986">
    <property type="protein sequence ID" value="AAK93663.1"/>
    <property type="molecule type" value="mRNA"/>
</dbReference>
<dbReference type="EMBL" id="AY113946">
    <property type="protein sequence ID" value="AAM44994.1"/>
    <property type="molecule type" value="mRNA"/>
</dbReference>
<dbReference type="EMBL" id="BT000684">
    <property type="protein sequence ID" value="AAN31829.1"/>
    <property type="molecule type" value="mRNA"/>
</dbReference>
<dbReference type="EMBL" id="AY088566">
    <property type="protein sequence ID" value="AAM66097.1"/>
    <property type="molecule type" value="mRNA"/>
</dbReference>
<dbReference type="PIR" id="G86360">
    <property type="entry name" value="G86360"/>
</dbReference>
<dbReference type="PIR" id="S38196">
    <property type="entry name" value="S38196"/>
</dbReference>
<dbReference type="RefSeq" id="NP_173685.1">
    <property type="nucleotide sequence ID" value="NM_102118.4"/>
</dbReference>
<dbReference type="SMR" id="Q39231"/>
<dbReference type="BioGRID" id="24116">
    <property type="interactions" value="17"/>
</dbReference>
<dbReference type="FunCoup" id="Q39231">
    <property type="interactions" value="1676"/>
</dbReference>
<dbReference type="IntAct" id="Q39231">
    <property type="interactions" value="15"/>
</dbReference>
<dbReference type="STRING" id="3702.Q39231"/>
<dbReference type="GlyCosmos" id="Q39231">
    <property type="glycosylation" value="1 site, No reported glycans"/>
</dbReference>
<dbReference type="GlyGen" id="Q39231">
    <property type="glycosylation" value="1 site"/>
</dbReference>
<dbReference type="PaxDb" id="3702-AT1G22710.1"/>
<dbReference type="ProteomicsDB" id="245228"/>
<dbReference type="EnsemblPlants" id="AT1G22710.1">
    <property type="protein sequence ID" value="AT1G22710.1"/>
    <property type="gene ID" value="AT1G22710"/>
</dbReference>
<dbReference type="GeneID" id="838877"/>
<dbReference type="Gramene" id="AT1G22710.1">
    <property type="protein sequence ID" value="AT1G22710.1"/>
    <property type="gene ID" value="AT1G22710"/>
</dbReference>
<dbReference type="KEGG" id="ath:AT1G22710"/>
<dbReference type="Araport" id="AT1G22710"/>
<dbReference type="TAIR" id="AT1G22710">
    <property type="gene designation" value="SUC2"/>
</dbReference>
<dbReference type="eggNOG" id="KOG0637">
    <property type="taxonomic scope" value="Eukaryota"/>
</dbReference>
<dbReference type="HOGENOM" id="CLU_025234_3_0_1"/>
<dbReference type="InParanoid" id="Q39231"/>
<dbReference type="OMA" id="GIAWAGM"/>
<dbReference type="OrthoDB" id="28755at2759"/>
<dbReference type="PhylomeDB" id="Q39231"/>
<dbReference type="BioCyc" id="MetaCyc:AT1G22710-MONOMER"/>
<dbReference type="UniPathway" id="UPA00238"/>
<dbReference type="PRO" id="PR:Q39231"/>
<dbReference type="Proteomes" id="UP000006548">
    <property type="component" value="Chromosome 1"/>
</dbReference>
<dbReference type="ExpressionAtlas" id="Q39231">
    <property type="expression patterns" value="baseline and differential"/>
</dbReference>
<dbReference type="GO" id="GO:0005634">
    <property type="term" value="C:nucleus"/>
    <property type="evidence" value="ECO:0007005"/>
    <property type="project" value="TAIR"/>
</dbReference>
<dbReference type="GO" id="GO:0005886">
    <property type="term" value="C:plasma membrane"/>
    <property type="evidence" value="ECO:0000314"/>
    <property type="project" value="TAIR"/>
</dbReference>
<dbReference type="GO" id="GO:0008506">
    <property type="term" value="F:sucrose:proton symporter activity"/>
    <property type="evidence" value="ECO:0000304"/>
    <property type="project" value="TAIR"/>
</dbReference>
<dbReference type="GO" id="GO:0005985">
    <property type="term" value="P:sucrose metabolic process"/>
    <property type="evidence" value="ECO:0007669"/>
    <property type="project" value="UniProtKB-UniPathway"/>
</dbReference>
<dbReference type="CDD" id="cd17313">
    <property type="entry name" value="MFS_SLC45_SUC"/>
    <property type="match status" value="1"/>
</dbReference>
<dbReference type="FunFam" id="1.20.1250.20:FF:000174">
    <property type="entry name" value="Sucrose transport protein"/>
    <property type="match status" value="1"/>
</dbReference>
<dbReference type="Gene3D" id="1.20.1250.20">
    <property type="entry name" value="MFS general substrate transporter like domains"/>
    <property type="match status" value="1"/>
</dbReference>
<dbReference type="InterPro" id="IPR011701">
    <property type="entry name" value="MFS"/>
</dbReference>
<dbReference type="InterPro" id="IPR036259">
    <property type="entry name" value="MFS_trans_sf"/>
</dbReference>
<dbReference type="InterPro" id="IPR005989">
    <property type="entry name" value="Suc_symporter_pln"/>
</dbReference>
<dbReference type="NCBIfam" id="TIGR01301">
    <property type="entry name" value="GPH_sucrose"/>
    <property type="match status" value="1"/>
</dbReference>
<dbReference type="PANTHER" id="PTHR19432:SF67">
    <property type="entry name" value="SUCROSE TRANSPORT PROTEIN SUC2"/>
    <property type="match status" value="1"/>
</dbReference>
<dbReference type="PANTHER" id="PTHR19432">
    <property type="entry name" value="SUGAR TRANSPORTER"/>
    <property type="match status" value="1"/>
</dbReference>
<dbReference type="Pfam" id="PF07690">
    <property type="entry name" value="MFS_1"/>
    <property type="match status" value="1"/>
</dbReference>
<dbReference type="SUPFAM" id="SSF103473">
    <property type="entry name" value="MFS general substrate transporter"/>
    <property type="match status" value="1"/>
</dbReference>
<protein>
    <recommendedName>
        <fullName evidence="12">Sucrose transport protein SUC2</fullName>
        <shortName evidence="10">AtSUC2</shortName>
    </recommendedName>
    <alternativeName>
        <fullName>Sucrose permease 2</fullName>
    </alternativeName>
    <alternativeName>
        <fullName evidence="11">Sucrose transporter 1</fullName>
    </alternativeName>
    <alternativeName>
        <fullName evidence="12">Sucrose-proton symporter 2</fullName>
    </alternativeName>
</protein>
<reference key="1">
    <citation type="journal article" date="1994" name="Plant J.">
        <title>SUC1 and SUC2: two sucrose transporters from Arabidopsis thaliana; expression and characterization in baker's yeast and identification of the histidine-tagged protein.</title>
        <authorList>
            <person name="Sauer N."/>
            <person name="Stolz J."/>
        </authorList>
    </citation>
    <scope>NUCLEOTIDE SEQUENCE [MRNA]</scope>
    <scope>FUNCTION</scope>
    <scope>BIOPHYSICOCHEMICAL PROPERTIES</scope>
    <scope>ACTIVITY REGULATION</scope>
    <scope>TISSUE SPECIFICITY</scope>
    <scope>TRANSPORTER ACTIVITY</scope>
    <source>
        <strain>cv. Columbia</strain>
    </source>
</reference>
<reference key="2">
    <citation type="journal article" date="2000" name="Nature">
        <title>Sequence and analysis of chromosome 1 of the plant Arabidopsis thaliana.</title>
        <authorList>
            <person name="Theologis A."/>
            <person name="Ecker J.R."/>
            <person name="Palm C.J."/>
            <person name="Federspiel N.A."/>
            <person name="Kaul S."/>
            <person name="White O."/>
            <person name="Alonso J."/>
            <person name="Altafi H."/>
            <person name="Araujo R."/>
            <person name="Bowman C.L."/>
            <person name="Brooks S.Y."/>
            <person name="Buehler E."/>
            <person name="Chan A."/>
            <person name="Chao Q."/>
            <person name="Chen H."/>
            <person name="Cheuk R.F."/>
            <person name="Chin C.W."/>
            <person name="Chung M.K."/>
            <person name="Conn L."/>
            <person name="Conway A.B."/>
            <person name="Conway A.R."/>
            <person name="Creasy T.H."/>
            <person name="Dewar K."/>
            <person name="Dunn P."/>
            <person name="Etgu P."/>
            <person name="Feldblyum T.V."/>
            <person name="Feng J.-D."/>
            <person name="Fong B."/>
            <person name="Fujii C.Y."/>
            <person name="Gill J.E."/>
            <person name="Goldsmith A.D."/>
            <person name="Haas B."/>
            <person name="Hansen N.F."/>
            <person name="Hughes B."/>
            <person name="Huizar L."/>
            <person name="Hunter J.L."/>
            <person name="Jenkins J."/>
            <person name="Johnson-Hopson C."/>
            <person name="Khan S."/>
            <person name="Khaykin E."/>
            <person name="Kim C.J."/>
            <person name="Koo H.L."/>
            <person name="Kremenetskaia I."/>
            <person name="Kurtz D.B."/>
            <person name="Kwan A."/>
            <person name="Lam B."/>
            <person name="Langin-Hooper S."/>
            <person name="Lee A."/>
            <person name="Lee J.M."/>
            <person name="Lenz C.A."/>
            <person name="Li J.H."/>
            <person name="Li Y.-P."/>
            <person name="Lin X."/>
            <person name="Liu S.X."/>
            <person name="Liu Z.A."/>
            <person name="Luros J.S."/>
            <person name="Maiti R."/>
            <person name="Marziali A."/>
            <person name="Militscher J."/>
            <person name="Miranda M."/>
            <person name="Nguyen M."/>
            <person name="Nierman W.C."/>
            <person name="Osborne B.I."/>
            <person name="Pai G."/>
            <person name="Peterson J."/>
            <person name="Pham P.K."/>
            <person name="Rizzo M."/>
            <person name="Rooney T."/>
            <person name="Rowley D."/>
            <person name="Sakano H."/>
            <person name="Salzberg S.L."/>
            <person name="Schwartz J.R."/>
            <person name="Shinn P."/>
            <person name="Southwick A.M."/>
            <person name="Sun H."/>
            <person name="Tallon L.J."/>
            <person name="Tambunga G."/>
            <person name="Toriumi M.J."/>
            <person name="Town C.D."/>
            <person name="Utterback T."/>
            <person name="Van Aken S."/>
            <person name="Vaysberg M."/>
            <person name="Vysotskaia V.S."/>
            <person name="Walker M."/>
            <person name="Wu D."/>
            <person name="Yu G."/>
            <person name="Fraser C.M."/>
            <person name="Venter J.C."/>
            <person name="Davis R.W."/>
        </authorList>
    </citation>
    <scope>NUCLEOTIDE SEQUENCE [LARGE SCALE GENOMIC DNA]</scope>
    <source>
        <strain>cv. Columbia</strain>
    </source>
</reference>
<reference key="3">
    <citation type="journal article" date="2017" name="Plant J.">
        <title>Araport11: a complete reannotation of the Arabidopsis thaliana reference genome.</title>
        <authorList>
            <person name="Cheng C.Y."/>
            <person name="Krishnakumar V."/>
            <person name="Chan A.P."/>
            <person name="Thibaud-Nissen F."/>
            <person name="Schobel S."/>
            <person name="Town C.D."/>
        </authorList>
    </citation>
    <scope>GENOME REANNOTATION</scope>
    <source>
        <strain>cv. Columbia</strain>
    </source>
</reference>
<reference key="4">
    <citation type="journal article" date="2003" name="Science">
        <title>Empirical analysis of transcriptional activity in the Arabidopsis genome.</title>
        <authorList>
            <person name="Yamada K."/>
            <person name="Lim J."/>
            <person name="Dale J.M."/>
            <person name="Chen H."/>
            <person name="Shinn P."/>
            <person name="Palm C.J."/>
            <person name="Southwick A.M."/>
            <person name="Wu H.C."/>
            <person name="Kim C.J."/>
            <person name="Nguyen M."/>
            <person name="Pham P.K."/>
            <person name="Cheuk R.F."/>
            <person name="Karlin-Newmann G."/>
            <person name="Liu S.X."/>
            <person name="Lam B."/>
            <person name="Sakano H."/>
            <person name="Wu T."/>
            <person name="Yu G."/>
            <person name="Miranda M."/>
            <person name="Quach H.L."/>
            <person name="Tripp M."/>
            <person name="Chang C.H."/>
            <person name="Lee J.M."/>
            <person name="Toriumi M.J."/>
            <person name="Chan M.M."/>
            <person name="Tang C.C."/>
            <person name="Onodera C.S."/>
            <person name="Deng J.M."/>
            <person name="Akiyama K."/>
            <person name="Ansari Y."/>
            <person name="Arakawa T."/>
            <person name="Banh J."/>
            <person name="Banno F."/>
            <person name="Bowser L."/>
            <person name="Brooks S.Y."/>
            <person name="Carninci P."/>
            <person name="Chao Q."/>
            <person name="Choy N."/>
            <person name="Enju A."/>
            <person name="Goldsmith A.D."/>
            <person name="Gurjal M."/>
            <person name="Hansen N.F."/>
            <person name="Hayashizaki Y."/>
            <person name="Johnson-Hopson C."/>
            <person name="Hsuan V.W."/>
            <person name="Iida K."/>
            <person name="Karnes M."/>
            <person name="Khan S."/>
            <person name="Koesema E."/>
            <person name="Ishida J."/>
            <person name="Jiang P.X."/>
            <person name="Jones T."/>
            <person name="Kawai J."/>
            <person name="Kamiya A."/>
            <person name="Meyers C."/>
            <person name="Nakajima M."/>
            <person name="Narusaka M."/>
            <person name="Seki M."/>
            <person name="Sakurai T."/>
            <person name="Satou M."/>
            <person name="Tamse R."/>
            <person name="Vaysberg M."/>
            <person name="Wallender E.K."/>
            <person name="Wong C."/>
            <person name="Yamamura Y."/>
            <person name="Yuan S."/>
            <person name="Shinozaki K."/>
            <person name="Davis R.W."/>
            <person name="Theologis A."/>
            <person name="Ecker J.R."/>
        </authorList>
    </citation>
    <scope>NUCLEOTIDE SEQUENCE [LARGE SCALE MRNA]</scope>
    <source>
        <strain>cv. Columbia</strain>
    </source>
</reference>
<reference key="5">
    <citation type="submission" date="2002-03" db="EMBL/GenBank/DDBJ databases">
        <title>Full-length cDNA from Arabidopsis thaliana.</title>
        <authorList>
            <person name="Brover V.V."/>
            <person name="Troukhan M.E."/>
            <person name="Alexandrov N.A."/>
            <person name="Lu Y.-P."/>
            <person name="Flavell R.B."/>
            <person name="Feldmann K.A."/>
        </authorList>
    </citation>
    <scope>NUCLEOTIDE SEQUENCE [LARGE SCALE MRNA]</scope>
</reference>
<reference key="6">
    <citation type="journal article" date="1995" name="Planta">
        <title>The promoter of the Arabidopsis thaliana SUC2 sucrose-H(+) symporter gene directs expression of beta-glucuronidase to the phloem: evidence for phloem loading and unloading by SUC2.</title>
        <authorList>
            <person name="Truernit E."/>
            <person name="Sauer N."/>
        </authorList>
    </citation>
    <scope>TISSUE SPECIFICITY</scope>
    <scope>DEVELOPMENTAL STAGE</scope>
</reference>
<reference key="7">
    <citation type="journal article" date="1996" name="Bot. Acta">
        <title>The Arabidopsis thaliana AtSUC2 gene is specifically expressed in companion cells.</title>
        <authorList>
            <person name="Stadler R."/>
            <person name="Sauer N."/>
        </authorList>
    </citation>
    <scope>TISSUE SPECIFICITY</scope>
</reference>
<reference key="8">
    <citation type="journal article" date="2000" name="Proc. Natl. Acad. Sci. U.S.A.">
        <title>Genetic evidence for the in planta role of phloem-specific plasma membrane sucrose transporters.</title>
        <authorList>
            <person name="Gottwald J.R."/>
            <person name="Krysan P.J."/>
            <person name="Young J.C."/>
            <person name="Evert R.F."/>
            <person name="Sussman M.R."/>
        </authorList>
    </citation>
    <scope>FUNCTION</scope>
</reference>
<reference key="9">
    <citation type="journal article" date="2001" name="Plant Cell Physiol.">
        <title>Sugar-induced increase in cytosolic Ca(2+) in Arabidopsis thaliana whole plants.</title>
        <authorList>
            <person name="Furuichi T."/>
            <person name="Mori I.C."/>
            <person name="Takahashi K."/>
            <person name="Muto S."/>
        </authorList>
    </citation>
    <scope>INDUCTION</scope>
</reference>
<reference key="10">
    <citation type="journal article" date="2003" name="BMC Biochem.">
        <title>Interactions between co-expressed Arabidopsis sucrose transporters in the split-ubiquitin system.</title>
        <authorList>
            <person name="Schulze W.X."/>
            <person name="Reinders A."/>
            <person name="Ward J."/>
            <person name="Lalonde S."/>
            <person name="Frommer W.B."/>
        </authorList>
    </citation>
    <scope>TISSUE SPECIFICITY</scope>
    <scope>HOMODIMERIZATION</scope>
    <scope>INTERACTION WITH SUC3 AND SUC4</scope>
</reference>
<reference key="11">
    <citation type="journal article" date="2003" name="J. Biol. Chem.">
        <title>Substrate specificity of the Arabidopsis thaliana sucrose transporter AtSUC2.</title>
        <authorList>
            <person name="Chandran D."/>
            <person name="Reinders A."/>
            <person name="Ward J.M."/>
        </authorList>
    </citation>
    <scope>FUNCTION</scope>
</reference>
<reference key="12">
    <citation type="journal article" date="2003" name="Plant Physiol.">
        <title>The companion cell-specific Arabidopsis disaccharide carrier AtSUC2 is expressed in nematode-induced syncytia.</title>
        <authorList>
            <person name="Juergensen K."/>
            <person name="Scholz-Starke J."/>
            <person name="Sauer N."/>
            <person name="Hess P."/>
            <person name="van Bel A.J.E."/>
            <person name="Grundler F.M.W."/>
        </authorList>
    </citation>
    <scope>INDUCTION</scope>
</reference>
<comment type="function">
    <text evidence="2 6 8">Responsible for the transport of sucrose into the cell, with the concomitant uptake of protons (symport system). Can also transport other glucosides such as maltose, arbutin (hydroquinone-beta-D-glucoside), salicin (2-(hydroxymethyl)phenyl-beta-D-glucoside), alpha-phenylglucoside, beta-phenylglucoside, alpha-paranitrophenylglucoside, beta-paranitrophenylglucoside, and paranitrophenyl-beta-thioglucoside. May also transport biotin. Required for apoplastic phloem sucrose loading in source tissues (e.g. leaves) in order to transport it to sink tissues (e.g. roots, flowers).</text>
</comment>
<comment type="catalytic activity">
    <reaction evidence="8">
        <text>sucrose(out) + H(+)(out) = sucrose(in) + H(+)(in)</text>
        <dbReference type="Rhea" id="RHEA:72187"/>
        <dbReference type="ChEBI" id="CHEBI:15378"/>
        <dbReference type="ChEBI" id="CHEBI:17992"/>
    </reaction>
    <physiologicalReaction direction="left-to-right" evidence="8">
        <dbReference type="Rhea" id="RHEA:72188"/>
    </physiologicalReaction>
</comment>
<comment type="activity regulation">
    <text evidence="8">Inhibited by protonophores (e.g. dinitrophenol and carbonyl cyanide m-chlorophenyl-hydrazone (CCCP)) and SH group inhibitors (e.g. N-ethylmaleimide (NEM) and p-chloromercuriphenyl sulphonic acid (PCMPS)).</text>
</comment>
<comment type="biophysicochemical properties">
    <kinetics>
        <KM evidence="8">530 uM for sucrose (at pH 5.5 and 30 degrees Celsius)</KM>
        <Vmax evidence="8">12.0 umol/h/g enzyme (without glucose)</Vmax>
        <Vmax evidence="8">77.0 umol/h/g enzyme (in the presence of 10 mM glucose)</Vmax>
    </kinetics>
    <phDependence>
        <text evidence="8">Optimum pH is 5.</text>
    </phDependence>
</comment>
<comment type="pathway">
    <text>Glycan biosynthesis; sucrose metabolism.</text>
</comment>
<comment type="subunit">
    <text evidence="5">Homodimer. Interacts with SUC3 and SUC4.</text>
</comment>
<comment type="subcellular location">
    <subcellularLocation>
        <location evidence="13">Cell membrane</location>
        <topology evidence="13">Multi-pass membrane protein</topology>
    </subcellularLocation>
</comment>
<comment type="tissue specificity">
    <text evidence="5 7 8 9">Expressed in leaves and, to a lower extent, in roots, flowers and stems. Highly specific to the phloem, exclusively localized in companion cells (at protein level).</text>
</comment>
<comment type="developmental stage">
    <text evidence="7">First seen in the tips of young rosette leaves. In older leaves and during their concomitant sink/source transition, expression proceeded from the tips to the bases of the leaves.</text>
</comment>
<comment type="induction">
    <text evidence="3 4">Induced by sucrose depletion. Specifically induced by H.schachtii (cyst nematodes) in nematode-induced syncytia.</text>
</comment>
<comment type="similarity">
    <text evidence="13">Belongs to the glycoside-pentoside-hexuronide (GPH) cation symporter transporter (TC 2.A.2.4) family.</text>
</comment>